<protein>
    <recommendedName>
        <fullName evidence="1">Urease accessory protein UreE</fullName>
    </recommendedName>
</protein>
<feature type="chain" id="PRO_1000062566" description="Urease accessory protein UreE">
    <location>
        <begin position="1"/>
        <end position="230"/>
    </location>
</feature>
<feature type="region of interest" description="Disordered" evidence="2">
    <location>
        <begin position="200"/>
        <end position="230"/>
    </location>
</feature>
<feature type="compositionally biased region" description="Basic residues" evidence="2">
    <location>
        <begin position="200"/>
        <end position="210"/>
    </location>
</feature>
<feature type="compositionally biased region" description="Basic and acidic residues" evidence="2">
    <location>
        <begin position="211"/>
        <end position="230"/>
    </location>
</feature>
<organism>
    <name type="scientific">Yersinia enterocolitica serotype O:8 / biotype 1B (strain NCTC 13174 / 8081)</name>
    <dbReference type="NCBI Taxonomy" id="393305"/>
    <lineage>
        <taxon>Bacteria</taxon>
        <taxon>Pseudomonadati</taxon>
        <taxon>Pseudomonadota</taxon>
        <taxon>Gammaproteobacteria</taxon>
        <taxon>Enterobacterales</taxon>
        <taxon>Yersiniaceae</taxon>
        <taxon>Yersinia</taxon>
    </lineage>
</organism>
<sequence>MILIEHILGNVKKDPVWQEKLKDATFDLLVLDQREAQKSRCRKLSTQGLDLGISLDRHVVLADGDVLAWDEKTNVAVVVQINLRDVMVIDLSELKSRSPDELIKTCFELGHALGNQHWKAVTKNNEVYVPLTVATTMMDSVMRTHGFQHLPFRFVKGAEILPLLSNSEARLLFGGAEDTDTHVHVASPLDEPHGSGLHVHAIHSHGTGHTHSHDHDHSHSHGDHDHDHKH</sequence>
<evidence type="ECO:0000255" key="1">
    <source>
        <dbReference type="HAMAP-Rule" id="MF_00822"/>
    </source>
</evidence>
<evidence type="ECO:0000256" key="2">
    <source>
        <dbReference type="SAM" id="MobiDB-lite"/>
    </source>
</evidence>
<dbReference type="EMBL" id="AM286415">
    <property type="protein sequence ID" value="CAL11052.1"/>
    <property type="molecule type" value="Genomic_DNA"/>
</dbReference>
<dbReference type="RefSeq" id="WP_005172973.1">
    <property type="nucleotide sequence ID" value="NC_008800.1"/>
</dbReference>
<dbReference type="RefSeq" id="YP_001005288.1">
    <property type="nucleotide sequence ID" value="NC_008800.1"/>
</dbReference>
<dbReference type="SMR" id="A1JKE0"/>
<dbReference type="KEGG" id="yen:YE0954"/>
<dbReference type="PATRIC" id="fig|393305.7.peg.1055"/>
<dbReference type="eggNOG" id="COG2371">
    <property type="taxonomic scope" value="Bacteria"/>
</dbReference>
<dbReference type="HOGENOM" id="CLU_095954_0_0_6"/>
<dbReference type="OrthoDB" id="3394858at2"/>
<dbReference type="Proteomes" id="UP000000642">
    <property type="component" value="Chromosome"/>
</dbReference>
<dbReference type="GO" id="GO:0005737">
    <property type="term" value="C:cytoplasm"/>
    <property type="evidence" value="ECO:0007669"/>
    <property type="project" value="UniProtKB-SubCell"/>
</dbReference>
<dbReference type="GO" id="GO:0016151">
    <property type="term" value="F:nickel cation binding"/>
    <property type="evidence" value="ECO:0007669"/>
    <property type="project" value="UniProtKB-UniRule"/>
</dbReference>
<dbReference type="GO" id="GO:0051082">
    <property type="term" value="F:unfolded protein binding"/>
    <property type="evidence" value="ECO:0007669"/>
    <property type="project" value="UniProtKB-UniRule"/>
</dbReference>
<dbReference type="GO" id="GO:0006457">
    <property type="term" value="P:protein folding"/>
    <property type="evidence" value="ECO:0007669"/>
    <property type="project" value="InterPro"/>
</dbReference>
<dbReference type="CDD" id="cd00571">
    <property type="entry name" value="UreE"/>
    <property type="match status" value="1"/>
</dbReference>
<dbReference type="Gene3D" id="2.60.260.20">
    <property type="entry name" value="Urease metallochaperone UreE, N-terminal domain"/>
    <property type="match status" value="1"/>
</dbReference>
<dbReference type="HAMAP" id="MF_00822">
    <property type="entry name" value="UreE"/>
    <property type="match status" value="1"/>
</dbReference>
<dbReference type="InterPro" id="IPR012406">
    <property type="entry name" value="UreE"/>
</dbReference>
<dbReference type="InterPro" id="IPR004029">
    <property type="entry name" value="UreE_N"/>
</dbReference>
<dbReference type="InterPro" id="IPR036118">
    <property type="entry name" value="UreE_N_sf"/>
</dbReference>
<dbReference type="NCBIfam" id="NF009761">
    <property type="entry name" value="PRK13262.1"/>
    <property type="match status" value="1"/>
</dbReference>
<dbReference type="Pfam" id="PF02814">
    <property type="entry name" value="UreE_N"/>
    <property type="match status" value="1"/>
</dbReference>
<dbReference type="PIRSF" id="PIRSF036402">
    <property type="entry name" value="Ureas_acces_UreE"/>
    <property type="match status" value="1"/>
</dbReference>
<dbReference type="SMART" id="SM00988">
    <property type="entry name" value="UreE_N"/>
    <property type="match status" value="1"/>
</dbReference>
<dbReference type="SUPFAM" id="SSF69287">
    <property type="entry name" value="Urease metallochaperone UreE, N-terminal domain"/>
    <property type="match status" value="1"/>
</dbReference>
<gene>
    <name evidence="1" type="primary">ureE</name>
    <name type="ordered locus">YE0954</name>
</gene>
<reference key="1">
    <citation type="journal article" date="2006" name="PLoS Genet.">
        <title>The complete genome sequence and comparative genome analysis of the high pathogenicity Yersinia enterocolitica strain 8081.</title>
        <authorList>
            <person name="Thomson N.R."/>
            <person name="Howard S."/>
            <person name="Wren B.W."/>
            <person name="Holden M.T.G."/>
            <person name="Crossman L."/>
            <person name="Challis G.L."/>
            <person name="Churcher C."/>
            <person name="Mungall K."/>
            <person name="Brooks K."/>
            <person name="Chillingworth T."/>
            <person name="Feltwell T."/>
            <person name="Abdellah Z."/>
            <person name="Hauser H."/>
            <person name="Jagels K."/>
            <person name="Maddison M."/>
            <person name="Moule S."/>
            <person name="Sanders M."/>
            <person name="Whitehead S."/>
            <person name="Quail M.A."/>
            <person name="Dougan G."/>
            <person name="Parkhill J."/>
            <person name="Prentice M.B."/>
        </authorList>
    </citation>
    <scope>NUCLEOTIDE SEQUENCE [LARGE SCALE GENOMIC DNA]</scope>
    <source>
        <strain>NCTC 13174 / 8081</strain>
    </source>
</reference>
<keyword id="KW-0143">Chaperone</keyword>
<keyword id="KW-0963">Cytoplasm</keyword>
<keyword id="KW-0533">Nickel</keyword>
<keyword id="KW-0996">Nickel insertion</keyword>
<proteinExistence type="inferred from homology"/>
<accession>A1JKE0</accession>
<name>UREE_YERE8</name>
<comment type="function">
    <text evidence="1">Involved in urease metallocenter assembly. Binds nickel. Probably functions as a nickel donor during metallocenter assembly.</text>
</comment>
<comment type="subcellular location">
    <subcellularLocation>
        <location evidence="1">Cytoplasm</location>
    </subcellularLocation>
</comment>
<comment type="similarity">
    <text evidence="1">Belongs to the UreE family.</text>
</comment>